<protein>
    <recommendedName>
        <fullName evidence="1">Matrix protein 2</fullName>
    </recommendedName>
    <alternativeName>
        <fullName evidence="1">Proton channel protein M2</fullName>
    </alternativeName>
</protein>
<evidence type="ECO:0000255" key="1">
    <source>
        <dbReference type="HAMAP-Rule" id="MF_04069"/>
    </source>
</evidence>
<evidence type="ECO:0000256" key="2">
    <source>
        <dbReference type="SAM" id="MobiDB-lite"/>
    </source>
</evidence>
<gene>
    <name evidence="1" type="primary">M</name>
    <name type="synonym">M2</name>
</gene>
<name>M2_I77AF</name>
<reference key="1">
    <citation type="journal article" date="2006" name="Science">
        <title>Large-scale sequence analysis of avian influenza isolates.</title>
        <authorList>
            <person name="Obenauer J.C."/>
            <person name="Denson J."/>
            <person name="Mehta P.K."/>
            <person name="Su X."/>
            <person name="Mukatira S."/>
            <person name="Finkelstein D.B."/>
            <person name="Xu X."/>
            <person name="Wang J."/>
            <person name="Ma J."/>
            <person name="Fan Y."/>
            <person name="Rakestraw K.M."/>
            <person name="Webster R.G."/>
            <person name="Hoffmann E."/>
            <person name="Krauss S."/>
            <person name="Zheng J."/>
            <person name="Zhang Z."/>
            <person name="Naeve C.W."/>
        </authorList>
    </citation>
    <scope>NUCLEOTIDE SEQUENCE [GENOMIC RNA]</scope>
</reference>
<organismHost>
    <name type="scientific">Aves</name>
    <dbReference type="NCBI Taxonomy" id="8782"/>
</organismHost>
<comment type="function">
    <text evidence="1">Forms a proton-selective ion channel that is necessary for the efficient release of the viral genome during virus entry. After attaching to the cell surface, the virion enters the cell by endocytosis. Acidification of the endosome triggers M2 ion channel activity. The influx of protons into virion interior is believed to disrupt interactions between the viral ribonucleoprotein (RNP), matrix protein 1 (M1), and lipid bilayers, thereby freeing the viral genome from interaction with viral proteins and enabling RNA segments to migrate to the host cell nucleus, where influenza virus RNA transcription and replication occur. Also plays a role in viral proteins secretory pathway. Elevates the intravesicular pH of normally acidic compartments, such as trans-Golgi network, preventing newly formed hemagglutinin from premature switching to the fusion-active conformation.</text>
</comment>
<comment type="activity regulation">
    <text>The M2 protein from most influenza A strains is inhibited by amantadine and rimantadine, resulting in viral uncoating incapacity. Emergence of amantadine-resistant variants is usually rapid.</text>
</comment>
<comment type="subunit">
    <text evidence="1">Homotetramer; composed of two disulfide-linked dimers held together by non-covalent interactions. May interact with matrix protein 1.</text>
</comment>
<comment type="subcellular location">
    <subcellularLocation>
        <location evidence="1">Virion membrane</location>
    </subcellularLocation>
    <subcellularLocation>
        <location evidence="1">Host apical cell membrane</location>
        <topology evidence="1">Single-pass type III membrane protein</topology>
    </subcellularLocation>
    <text evidence="1">Abundantly expressed at the apical plasma membrane in infected polarized epithelial cells, in close proximity to budding and assembled virions. Minor component of virions (only 16-20 molecules/virion).</text>
</comment>
<comment type="alternative products">
    <event type="alternative splicing"/>
    <isoform>
        <id>Q0A415-1</id>
        <name>M2</name>
        <sequence type="displayed"/>
    </isoform>
    <isoform>
        <id>Q0A414-1</id>
        <name>M1</name>
        <sequence type="external"/>
    </isoform>
    <text>Only the first 9 residues are shared by the 2 isoforms.</text>
</comment>
<comment type="domain">
    <text evidence="1">Cytoplasmic tail plays an important role in virion assembly and morphogenesis.</text>
</comment>
<comment type="miscellaneous">
    <text evidence="1">When the channel is activated, one or more imidazole moieties of His-37 probably become bi-protonated.</text>
</comment>
<comment type="similarity">
    <text evidence="1">Belongs to the influenza viruses matrix protein M2 family.</text>
</comment>
<proteinExistence type="inferred from homology"/>
<sequence>MSLLTEVETPIRNEWECRCSDSSDPLVIAASIIGILHLILWILDRLLFKFIYRRFKYGLKRGPSMEGVPESMREEYRQEQQSAVDVDDSHFVNIELE</sequence>
<organism>
    <name type="scientific">Influenza A virus (strain A/Gull/Maryland/704/1977 H13N6)</name>
    <dbReference type="NCBI Taxonomy" id="384499"/>
    <lineage>
        <taxon>Viruses</taxon>
        <taxon>Riboviria</taxon>
        <taxon>Orthornavirae</taxon>
        <taxon>Negarnaviricota</taxon>
        <taxon>Polyploviricotina</taxon>
        <taxon>Insthoviricetes</taxon>
        <taxon>Articulavirales</taxon>
        <taxon>Orthomyxoviridae</taxon>
        <taxon>Alphainfluenzavirus</taxon>
        <taxon>Alphainfluenzavirus influenzae</taxon>
        <taxon>Influenza A virus</taxon>
    </lineage>
</organism>
<accession>Q0A415</accession>
<feature type="chain" id="PRO_0000326360" description="Matrix protein 2">
    <location>
        <begin position="1"/>
        <end position="97"/>
    </location>
</feature>
<feature type="topological domain" description="Virion surface" evidence="1">
    <location>
        <begin position="1"/>
        <end position="22"/>
    </location>
</feature>
<feature type="transmembrane region" description="Helical; Signal-anchor for type III membrane protein" evidence="1">
    <location>
        <begin position="23"/>
        <end position="43"/>
    </location>
</feature>
<feature type="topological domain" description="Intravirion" evidence="1">
    <location>
        <begin position="44"/>
        <end position="97"/>
    </location>
</feature>
<feature type="region of interest" description="Disordered" evidence="2">
    <location>
        <begin position="64"/>
        <end position="84"/>
    </location>
</feature>
<feature type="site" description="Essential for channel activity, possibly by being protonated during channel activation, and by forming the channel gate and the selective filter" evidence="1">
    <location>
        <position position="37"/>
    </location>
</feature>
<feature type="site" description="Seems to be involved in pH gating" evidence="1">
    <location>
        <position position="41"/>
    </location>
</feature>
<feature type="modified residue" description="Phosphoserine; by host" evidence="1">
    <location>
        <position position="64"/>
    </location>
</feature>
<feature type="modified residue" description="Phosphoserine; by host" evidence="1">
    <location>
        <position position="82"/>
    </location>
</feature>
<feature type="disulfide bond" description="Interchain (with C-17)" evidence="1">
    <location>
        <position position="17"/>
    </location>
</feature>
<feature type="disulfide bond" description="Interchain (with C-19)" evidence="1">
    <location>
        <position position="19"/>
    </location>
</feature>
<dbReference type="EMBL" id="CY014695">
    <property type="protein sequence ID" value="ABI84568.1"/>
    <property type="molecule type" value="Genomic_RNA"/>
</dbReference>
<dbReference type="SMR" id="Q0A415"/>
<dbReference type="Proteomes" id="UP000000828">
    <property type="component" value="Genome"/>
</dbReference>
<dbReference type="GO" id="GO:0020002">
    <property type="term" value="C:host cell plasma membrane"/>
    <property type="evidence" value="ECO:0007669"/>
    <property type="project" value="UniProtKB-SubCell"/>
</dbReference>
<dbReference type="GO" id="GO:0016020">
    <property type="term" value="C:membrane"/>
    <property type="evidence" value="ECO:0007669"/>
    <property type="project" value="UniProtKB-UniRule"/>
</dbReference>
<dbReference type="GO" id="GO:0055036">
    <property type="term" value="C:virion membrane"/>
    <property type="evidence" value="ECO:0007669"/>
    <property type="project" value="UniProtKB-SubCell"/>
</dbReference>
<dbReference type="GO" id="GO:0005216">
    <property type="term" value="F:monoatomic ion channel activity"/>
    <property type="evidence" value="ECO:0007669"/>
    <property type="project" value="UniProtKB-UniRule"/>
</dbReference>
<dbReference type="GO" id="GO:0015078">
    <property type="term" value="F:proton transmembrane transporter activity"/>
    <property type="evidence" value="ECO:0007669"/>
    <property type="project" value="UniProtKB-UniRule"/>
</dbReference>
<dbReference type="GO" id="GO:0051259">
    <property type="term" value="P:protein complex oligomerization"/>
    <property type="evidence" value="ECO:0007669"/>
    <property type="project" value="UniProtKB-UniRule"/>
</dbReference>
<dbReference type="GO" id="GO:0044694">
    <property type="term" value="P:symbiont genome entry into host cell via pore formation in plasma membrane"/>
    <property type="evidence" value="ECO:0007669"/>
    <property type="project" value="UniProtKB-UniRule"/>
</dbReference>
<dbReference type="GO" id="GO:0140321">
    <property type="term" value="P:symbiont-mediated suppression of host autophagy"/>
    <property type="evidence" value="ECO:0007669"/>
    <property type="project" value="UniProtKB-KW"/>
</dbReference>
<dbReference type="Gene3D" id="6.10.250.1640">
    <property type="match status" value="1"/>
</dbReference>
<dbReference type="HAMAP" id="MF_04069">
    <property type="entry name" value="INFV_M2"/>
    <property type="match status" value="1"/>
</dbReference>
<dbReference type="InterPro" id="IPR002089">
    <property type="entry name" value="Flu_M2"/>
</dbReference>
<dbReference type="Pfam" id="PF00599">
    <property type="entry name" value="Flu_M2"/>
    <property type="match status" value="1"/>
</dbReference>
<keyword id="KW-0025">Alternative splicing</keyword>
<keyword id="KW-1015">Disulfide bond</keyword>
<keyword id="KW-1032">Host cell membrane</keyword>
<keyword id="KW-1043">Host membrane</keyword>
<keyword id="KW-0945">Host-virus interaction</keyword>
<keyword id="KW-0375">Hydrogen ion transport</keyword>
<keyword id="KW-1083">Inhibition of host autophagy by virus</keyword>
<keyword id="KW-0407">Ion channel</keyword>
<keyword id="KW-0406">Ion transport</keyword>
<keyword id="KW-0449">Lipoprotein</keyword>
<keyword id="KW-0472">Membrane</keyword>
<keyword id="KW-0564">Palmitate</keyword>
<keyword id="KW-0597">Phosphoprotein</keyword>
<keyword id="KW-0735">Signal-anchor</keyword>
<keyword id="KW-0812">Transmembrane</keyword>
<keyword id="KW-1133">Transmembrane helix</keyword>
<keyword id="KW-0813">Transport</keyword>
<keyword id="KW-1182">Viral ion channel</keyword>
<keyword id="KW-0946">Virion</keyword>